<keyword id="KW-0002">3D-structure</keyword>
<keyword id="KW-0903">Direct protein sequencing</keyword>
<keyword id="KW-1185">Reference proteome</keyword>
<keyword id="KW-0687">Ribonucleoprotein</keyword>
<keyword id="KW-0689">Ribosomal protein</keyword>
<name>RL29_THET8</name>
<reference key="1">
    <citation type="submission" date="2004-11" db="EMBL/GenBank/DDBJ databases">
        <title>Complete genome sequence of Thermus thermophilus HB8.</title>
        <authorList>
            <person name="Masui R."/>
            <person name="Kurokawa K."/>
            <person name="Nakagawa N."/>
            <person name="Tokunaga F."/>
            <person name="Koyama Y."/>
            <person name="Shibata T."/>
            <person name="Oshima T."/>
            <person name="Yokoyama S."/>
            <person name="Yasunaga T."/>
            <person name="Kuramitsu S."/>
        </authorList>
    </citation>
    <scope>NUCLEOTIDE SEQUENCE [LARGE SCALE GENOMIC DNA]</scope>
    <source>
        <strain>ATCC 27634 / DSM 579 / HB8</strain>
    </source>
</reference>
<reference key="2">
    <citation type="journal article" date="1998" name="J. Biochem. Biophys. Methods">
        <title>Systematic, computer-assisted optimisation of the isolation of Thermus thermophilus 50S ribosomal proteins by reversed-phase high-performance liquid chromatography.</title>
        <authorList>
            <person name="Boysen R.I."/>
            <person name="Erdmann V.A."/>
            <person name="Hearn M.T."/>
        </authorList>
    </citation>
    <scope>PROTEIN SEQUENCE OF 1-59</scope>
</reference>
<reference key="3">
    <citation type="journal article" date="2000" name="Biol. Chem.">
        <title>Identification of the 50S ribosomal proteins from the eubacterium Thermus thermophilus.</title>
        <authorList>
            <person name="Katsani K.R."/>
            <person name="Tsiboli P."/>
            <person name="Anagnostopoulos K."/>
            <person name="Urlaub H."/>
            <person name="Choli-Papadopoulou T."/>
        </authorList>
    </citation>
    <scope>PROTEIN SEQUENCE OF 1-20</scope>
    <source>
        <strain>ATCC 27634 / DSM 579 / HB8</strain>
    </source>
</reference>
<reference key="4">
    <citation type="journal article" date="2005" name="Proteomics">
        <title>Extending ribosomal protein identifications to unsequenced bacterial strains using matrix-assisted laser desorption/ionization mass spectrometry.</title>
        <authorList>
            <person name="Suh M.-J."/>
            <person name="Hamburg D.M."/>
            <person name="Gregory S.T."/>
            <person name="Dahlberg A.E."/>
            <person name="Limbach P.A."/>
        </authorList>
    </citation>
    <scope>MASS SPECTROMETRY</scope>
    <source>
        <strain>ATCC 27634 / DSM 579 / HB8</strain>
    </source>
</reference>
<reference key="5">
    <citation type="journal article" date="2001" name="Cell">
        <title>The path of messenger RNA through the ribosome.</title>
        <authorList>
            <person name="Yusupova G.Z."/>
            <person name="Yusupov M.M."/>
            <person name="Cate J.H.D."/>
            <person name="Noller H.F."/>
        </authorList>
    </citation>
    <scope>X-RAY CRYSTALLOGRAPHY (5.0 ANGSTROMS) OF THE RIBOSOME</scope>
</reference>
<reference key="6">
    <citation type="journal article" date="2001" name="Science">
        <title>Crystal structure of the ribosome at 5.5 A resolution.</title>
        <authorList>
            <person name="Yusupov M.M."/>
            <person name="Yusupova G.Z."/>
            <person name="Baucom A."/>
            <person name="Lieberman K."/>
            <person name="Earnest T.N."/>
            <person name="Cate J.H.D."/>
            <person name="Noller H.F."/>
        </authorList>
    </citation>
    <scope>X-RAY CRYSTALLOGRAPHY (5.5 ANGSTROMS) OF THE RIBOSOME</scope>
</reference>
<reference key="7">
    <citation type="journal article" date="2008" name="Science">
        <title>Insights into translational termination from the structure of RF2 bound to the ribosome.</title>
        <authorList>
            <person name="Weixlbaumer A."/>
            <person name="Jin H."/>
            <person name="Neubauer C."/>
            <person name="Voorhees R.M."/>
            <person name="Petry S."/>
            <person name="Kelley A.C."/>
            <person name="Ramakrishnan V."/>
        </authorList>
    </citation>
    <scope>X-RAY CRYSTALLOGRAPHY (3.45 ANGSTROMS) OF 70S RIBOSOME IN COMPLEX WITH RF2</scope>
    <scope>SUBUNIT</scope>
</reference>
<reference key="8">
    <citation type="journal article" date="2010" name="Proc. Natl. Acad. Sci. U.S.A.">
        <title>Structure of the 70S ribosome bound to release factor 2 and a substrate analog provides insights into catalysis of peptide release.</title>
        <authorList>
            <person name="Jin H."/>
            <person name="Kelley A.C."/>
            <person name="Loakes D."/>
            <person name="Ramakrishnan V."/>
        </authorList>
    </citation>
    <scope>X-RAY CRYSTALLOGRAPHY (3.10 ANGSTROMS) OF 70S RIBOSOME IN COMPLEX WITH RF2</scope>
    <scope>SUBUNIT</scope>
</reference>
<sequence length="72" mass="8650">MKLSEVRKQLEEARKLSPVELEKLVREKKRELMELRFQASIGQLSQNHKIRDLKRQIARLLTVLNEKRRQNA</sequence>
<evidence type="ECO:0000269" key="1">
    <source>
    </source>
</evidence>
<evidence type="ECO:0000305" key="2"/>
<evidence type="ECO:0007829" key="3">
    <source>
        <dbReference type="PDB" id="4WT8"/>
    </source>
</evidence>
<accession>Q5SHP6</accession>
<protein>
    <recommendedName>
        <fullName evidence="2">Large ribosomal subunit protein uL29</fullName>
    </recommendedName>
    <alternativeName>
        <fullName>50S ribosomal protein L29</fullName>
    </alternativeName>
</protein>
<proteinExistence type="evidence at protein level"/>
<feature type="chain" id="PRO_0000130483" description="Large ribosomal subunit protein uL29">
    <location>
        <begin position="1"/>
        <end position="72"/>
    </location>
</feature>
<feature type="sequence conflict" description="In Ref. 2; AA sequence." evidence="2" ref="2">
    <original>V</original>
    <variation>M</variation>
    <location>
        <position position="6"/>
    </location>
</feature>
<feature type="sequence conflict" description="In Ref. 2; AA sequence." evidence="2" ref="2">
    <original>V</original>
    <variation>M</variation>
    <location>
        <position position="19"/>
    </location>
</feature>
<feature type="helix" evidence="3">
    <location>
        <begin position="3"/>
        <end position="14"/>
    </location>
</feature>
<feature type="helix" evidence="3">
    <location>
        <begin position="18"/>
        <end position="41"/>
    </location>
</feature>
<feature type="helix" evidence="3">
    <location>
        <begin position="49"/>
        <end position="71"/>
    </location>
</feature>
<dbReference type="EMBL" id="AP008226">
    <property type="protein sequence ID" value="BAD71507.1"/>
    <property type="molecule type" value="Genomic_DNA"/>
</dbReference>
<dbReference type="RefSeq" id="WP_008633416.1">
    <property type="nucleotide sequence ID" value="NC_006461.1"/>
</dbReference>
<dbReference type="RefSeq" id="YP_144950.1">
    <property type="nucleotide sequence ID" value="NC_006461.1"/>
</dbReference>
<dbReference type="PDB" id="1VVJ">
    <property type="method" value="X-ray"/>
    <property type="resolution" value="3.44 A"/>
    <property type="chains" value="R2/Y2=1-72"/>
</dbReference>
<dbReference type="PDB" id="1VY4">
    <property type="method" value="X-ray"/>
    <property type="resolution" value="2.60 A"/>
    <property type="chains" value="B2/D2=1-72"/>
</dbReference>
<dbReference type="PDB" id="1VY5">
    <property type="method" value="X-ray"/>
    <property type="resolution" value="2.55 A"/>
    <property type="chains" value="B2/D2=1-72"/>
</dbReference>
<dbReference type="PDB" id="1VY6">
    <property type="method" value="X-ray"/>
    <property type="resolution" value="2.90 A"/>
    <property type="chains" value="B2/D2=1-72"/>
</dbReference>
<dbReference type="PDB" id="1VY7">
    <property type="method" value="X-ray"/>
    <property type="resolution" value="2.80 A"/>
    <property type="chains" value="B2/D2=1-72"/>
</dbReference>
<dbReference type="PDB" id="4L47">
    <property type="method" value="X-ray"/>
    <property type="resolution" value="3.22 A"/>
    <property type="chains" value="R2/Y2=1-72"/>
</dbReference>
<dbReference type="PDB" id="4L71">
    <property type="method" value="X-ray"/>
    <property type="resolution" value="3.90 A"/>
    <property type="chains" value="R2/Y2=1-72"/>
</dbReference>
<dbReference type="PDB" id="4LEL">
    <property type="method" value="X-ray"/>
    <property type="resolution" value="3.90 A"/>
    <property type="chains" value="R2/Y2=1-72"/>
</dbReference>
<dbReference type="PDB" id="4LFZ">
    <property type="method" value="X-ray"/>
    <property type="resolution" value="3.92 A"/>
    <property type="chains" value="R2/Y2=1-72"/>
</dbReference>
<dbReference type="PDB" id="4LNT">
    <property type="method" value="X-ray"/>
    <property type="resolution" value="2.94 A"/>
    <property type="chains" value="R2/Y2=1-72"/>
</dbReference>
<dbReference type="PDB" id="4LSK">
    <property type="method" value="X-ray"/>
    <property type="resolution" value="3.48 A"/>
    <property type="chains" value="R2/Y2=1-72"/>
</dbReference>
<dbReference type="PDB" id="4LT8">
    <property type="method" value="X-ray"/>
    <property type="resolution" value="3.14 A"/>
    <property type="chains" value="R2/Y2=1-72"/>
</dbReference>
<dbReference type="PDB" id="4P6F">
    <property type="method" value="X-ray"/>
    <property type="resolution" value="3.60 A"/>
    <property type="chains" value="R2/Y2=1-72"/>
</dbReference>
<dbReference type="PDB" id="4P70">
    <property type="method" value="X-ray"/>
    <property type="resolution" value="3.68 A"/>
    <property type="chains" value="R2/Y2=1-72"/>
</dbReference>
<dbReference type="PDB" id="4TUA">
    <property type="method" value="X-ray"/>
    <property type="resolution" value="3.60 A"/>
    <property type="chains" value="R2/Y2=1-72"/>
</dbReference>
<dbReference type="PDB" id="4TUB">
    <property type="method" value="X-ray"/>
    <property type="resolution" value="3.60 A"/>
    <property type="chains" value="R2/Y2=1-72"/>
</dbReference>
<dbReference type="PDB" id="4TUC">
    <property type="method" value="X-ray"/>
    <property type="resolution" value="3.60 A"/>
    <property type="chains" value="R2/Y2=1-72"/>
</dbReference>
<dbReference type="PDB" id="4TUD">
    <property type="method" value="X-ray"/>
    <property type="resolution" value="3.60 A"/>
    <property type="chains" value="R2/Y2=1-72"/>
</dbReference>
<dbReference type="PDB" id="4TUE">
    <property type="method" value="X-ray"/>
    <property type="resolution" value="3.50 A"/>
    <property type="chains" value="R2/Y2=1-72"/>
</dbReference>
<dbReference type="PDB" id="4V42">
    <property type="method" value="X-ray"/>
    <property type="resolution" value="5.50 A"/>
    <property type="chains" value="BW=2-71"/>
</dbReference>
<dbReference type="PDB" id="4V4P">
    <property type="method" value="X-ray"/>
    <property type="resolution" value="5.50 A"/>
    <property type="chains" value="W=1-72"/>
</dbReference>
<dbReference type="PDB" id="4V4X">
    <property type="method" value="X-ray"/>
    <property type="resolution" value="5.00 A"/>
    <property type="chains" value="1=7-72"/>
</dbReference>
<dbReference type="PDB" id="4V4Y">
    <property type="method" value="X-ray"/>
    <property type="resolution" value="5.50 A"/>
    <property type="chains" value="1=1-72"/>
</dbReference>
<dbReference type="PDB" id="4V4Z">
    <property type="method" value="X-ray"/>
    <property type="resolution" value="4.51 A"/>
    <property type="chains" value="1=1-72"/>
</dbReference>
<dbReference type="PDB" id="4V51">
    <property type="method" value="X-ray"/>
    <property type="resolution" value="2.80 A"/>
    <property type="chains" value="B2/D2=1-72"/>
</dbReference>
<dbReference type="PDB" id="4V5A">
    <property type="method" value="X-ray"/>
    <property type="resolution" value="3.50 A"/>
    <property type="chains" value="B2/D2=1-72"/>
</dbReference>
<dbReference type="PDB" id="4V5C">
    <property type="method" value="X-ray"/>
    <property type="resolution" value="3.30 A"/>
    <property type="chains" value="B2/D2=1-72"/>
</dbReference>
<dbReference type="PDB" id="4V5D">
    <property type="method" value="X-ray"/>
    <property type="resolution" value="3.50 A"/>
    <property type="chains" value="B2/D2=1-72"/>
</dbReference>
<dbReference type="PDB" id="4V5E">
    <property type="method" value="X-ray"/>
    <property type="resolution" value="3.45 A"/>
    <property type="chains" value="B2/D2=1-72"/>
</dbReference>
<dbReference type="PDB" id="4V5F">
    <property type="method" value="X-ray"/>
    <property type="resolution" value="3.60 A"/>
    <property type="chains" value="B2/D2=1-72"/>
</dbReference>
<dbReference type="PDB" id="4V5G">
    <property type="method" value="X-ray"/>
    <property type="resolution" value="3.60 A"/>
    <property type="chains" value="B2/D2=1-72"/>
</dbReference>
<dbReference type="PDB" id="4V5J">
    <property type="method" value="X-ray"/>
    <property type="resolution" value="3.10 A"/>
    <property type="chains" value="B2/D2=1-72"/>
</dbReference>
<dbReference type="PDB" id="4V5K">
    <property type="method" value="X-ray"/>
    <property type="resolution" value="3.20 A"/>
    <property type="chains" value="B2/D2=1-72"/>
</dbReference>
<dbReference type="PDB" id="4V5L">
    <property type="method" value="X-ray"/>
    <property type="resolution" value="3.10 A"/>
    <property type="chains" value="B2=1-72"/>
</dbReference>
<dbReference type="PDB" id="4V5M">
    <property type="method" value="EM"/>
    <property type="resolution" value="7.80 A"/>
    <property type="chains" value="B2=1-72"/>
</dbReference>
<dbReference type="PDB" id="4V5N">
    <property type="method" value="EM"/>
    <property type="resolution" value="7.60 A"/>
    <property type="chains" value="B2=1-72"/>
</dbReference>
<dbReference type="PDB" id="4V5P">
    <property type="method" value="X-ray"/>
    <property type="resolution" value="3.10 A"/>
    <property type="chains" value="B2/D2=1-72"/>
</dbReference>
<dbReference type="PDB" id="4V5Q">
    <property type="method" value="X-ray"/>
    <property type="resolution" value="3.10 A"/>
    <property type="chains" value="B2/D2=1-72"/>
</dbReference>
<dbReference type="PDB" id="4V5R">
    <property type="method" value="X-ray"/>
    <property type="resolution" value="3.10 A"/>
    <property type="chains" value="B2/D2=1-72"/>
</dbReference>
<dbReference type="PDB" id="4V5S">
    <property type="method" value="X-ray"/>
    <property type="resolution" value="3.10 A"/>
    <property type="chains" value="B2/D2=1-72"/>
</dbReference>
<dbReference type="PDB" id="4V68">
    <property type="method" value="EM"/>
    <property type="resolution" value="6.40 A"/>
    <property type="chains" value="B2=12-62"/>
</dbReference>
<dbReference type="PDB" id="4V6A">
    <property type="method" value="X-ray"/>
    <property type="resolution" value="3.10 A"/>
    <property type="chains" value="B2/D2=1-72"/>
</dbReference>
<dbReference type="PDB" id="4V6F">
    <property type="method" value="X-ray"/>
    <property type="resolution" value="3.10 A"/>
    <property type="chains" value="AW/DW=1-72"/>
</dbReference>
<dbReference type="PDB" id="4V6G">
    <property type="method" value="X-ray"/>
    <property type="resolution" value="3.50 A"/>
    <property type="chains" value="BW/DW=1-72"/>
</dbReference>
<dbReference type="PDB" id="4V7J">
    <property type="method" value="X-ray"/>
    <property type="resolution" value="3.30 A"/>
    <property type="chains" value="A2/B2=1-72"/>
</dbReference>
<dbReference type="PDB" id="4V7K">
    <property type="method" value="X-ray"/>
    <property type="resolution" value="3.60 A"/>
    <property type="chains" value="A2/B2=1-72"/>
</dbReference>
<dbReference type="PDB" id="4V7L">
    <property type="method" value="X-ray"/>
    <property type="resolution" value="3.00 A"/>
    <property type="chains" value="B2/D2=1-72"/>
</dbReference>
<dbReference type="PDB" id="4V7M">
    <property type="method" value="X-ray"/>
    <property type="resolution" value="3.45 A"/>
    <property type="chains" value="B2/D2=1-72"/>
</dbReference>
<dbReference type="PDB" id="4V7W">
    <property type="method" value="X-ray"/>
    <property type="resolution" value="3.00 A"/>
    <property type="chains" value="B2/D2=1-72"/>
</dbReference>
<dbReference type="PDB" id="4V7X">
    <property type="method" value="X-ray"/>
    <property type="resolution" value="3.00 A"/>
    <property type="chains" value="B2/D2=1-72"/>
</dbReference>
<dbReference type="PDB" id="4V7Y">
    <property type="method" value="X-ray"/>
    <property type="resolution" value="3.00 A"/>
    <property type="chains" value="B2/D2=1-72"/>
</dbReference>
<dbReference type="PDB" id="4V7Z">
    <property type="method" value="X-ray"/>
    <property type="resolution" value="3.10 A"/>
    <property type="chains" value="B2/D2=1-72"/>
</dbReference>
<dbReference type="PDB" id="4V87">
    <property type="method" value="X-ray"/>
    <property type="resolution" value="3.10 A"/>
    <property type="chains" value="AW/DW=4-72"/>
</dbReference>
<dbReference type="PDB" id="4V8A">
    <property type="method" value="X-ray"/>
    <property type="resolution" value="3.20 A"/>
    <property type="chains" value="A2/B2=1-72"/>
</dbReference>
<dbReference type="PDB" id="4V8B">
    <property type="method" value="X-ray"/>
    <property type="resolution" value="3.00 A"/>
    <property type="chains" value="BW/DW=1-72"/>
</dbReference>
<dbReference type="PDB" id="4V8C">
    <property type="method" value="X-ray"/>
    <property type="resolution" value="3.30 A"/>
    <property type="chains" value="AW/BW=1-72"/>
</dbReference>
<dbReference type="PDB" id="4V8D">
    <property type="method" value="X-ray"/>
    <property type="resolution" value="3.00 A"/>
    <property type="chains" value="BW/DW=1-72"/>
</dbReference>
<dbReference type="PDB" id="4V8E">
    <property type="method" value="X-ray"/>
    <property type="resolution" value="3.30 A"/>
    <property type="chains" value="AW/CW=1-72"/>
</dbReference>
<dbReference type="PDB" id="4V8F">
    <property type="method" value="X-ray"/>
    <property type="resolution" value="3.30 A"/>
    <property type="chains" value="AW/DW=1-72"/>
</dbReference>
<dbReference type="PDB" id="4V8G">
    <property type="method" value="X-ray"/>
    <property type="resolution" value="3.00 A"/>
    <property type="chains" value="B2/D2=1-72"/>
</dbReference>
<dbReference type="PDB" id="4V8H">
    <property type="method" value="X-ray"/>
    <property type="resolution" value="3.10 A"/>
    <property type="chains" value="B2/D2=1-72"/>
</dbReference>
<dbReference type="PDB" id="4V8I">
    <property type="method" value="X-ray"/>
    <property type="resolution" value="2.70 A"/>
    <property type="chains" value="B2/D2=1-72"/>
</dbReference>
<dbReference type="PDB" id="4V8J">
    <property type="method" value="X-ray"/>
    <property type="resolution" value="3.90 A"/>
    <property type="chains" value="B2/D2=1-72"/>
</dbReference>
<dbReference type="PDB" id="4V8N">
    <property type="method" value="X-ray"/>
    <property type="resolution" value="3.10 A"/>
    <property type="chains" value="B2/D2=1-72"/>
</dbReference>
<dbReference type="PDB" id="4V8O">
    <property type="method" value="X-ray"/>
    <property type="resolution" value="3.80 A"/>
    <property type="chains" value="B2=1-72"/>
</dbReference>
<dbReference type="PDB" id="4V8Q">
    <property type="method" value="X-ray"/>
    <property type="resolution" value="3.10 A"/>
    <property type="chains" value="A2=1-72"/>
</dbReference>
<dbReference type="PDB" id="4V8U">
    <property type="method" value="X-ray"/>
    <property type="resolution" value="3.70 A"/>
    <property type="chains" value="B2/D2=1-72"/>
</dbReference>
<dbReference type="PDB" id="4V8X">
    <property type="method" value="X-ray"/>
    <property type="resolution" value="3.35 A"/>
    <property type="chains" value="B2/D2=1-72"/>
</dbReference>
<dbReference type="PDB" id="4V90">
    <property type="method" value="X-ray"/>
    <property type="resolution" value="2.95 A"/>
    <property type="chains" value="B2=2-72"/>
</dbReference>
<dbReference type="PDB" id="4V95">
    <property type="method" value="X-ray"/>
    <property type="resolution" value="3.20 A"/>
    <property type="chains" value="B2/D2=1-72"/>
</dbReference>
<dbReference type="PDB" id="4V97">
    <property type="method" value="X-ray"/>
    <property type="resolution" value="3.52 A"/>
    <property type="chains" value="B2/D2=1-72"/>
</dbReference>
<dbReference type="PDB" id="4V9A">
    <property type="method" value="X-ray"/>
    <property type="resolution" value="3.30 A"/>
    <property type="chains" value="BW/DW=1-72"/>
</dbReference>
<dbReference type="PDB" id="4V9B">
    <property type="method" value="X-ray"/>
    <property type="resolution" value="3.10 A"/>
    <property type="chains" value="BW/DW=1-72"/>
</dbReference>
<dbReference type="PDB" id="4V9H">
    <property type="method" value="X-ray"/>
    <property type="resolution" value="2.86 A"/>
    <property type="chains" value="B2=1-72"/>
</dbReference>
<dbReference type="PDB" id="4V9I">
    <property type="method" value="X-ray"/>
    <property type="resolution" value="3.30 A"/>
    <property type="chains" value="B2/D2=2-72"/>
</dbReference>
<dbReference type="PDB" id="4V9R">
    <property type="method" value="X-ray"/>
    <property type="resolution" value="3.00 A"/>
    <property type="chains" value="B2/D2=1-72"/>
</dbReference>
<dbReference type="PDB" id="4V9S">
    <property type="method" value="X-ray"/>
    <property type="resolution" value="3.10 A"/>
    <property type="chains" value="B2/D2=1-72"/>
</dbReference>
<dbReference type="PDB" id="4W2E">
    <property type="method" value="X-ray"/>
    <property type="resolution" value="2.90 A"/>
    <property type="chains" value="2=1-72"/>
</dbReference>
<dbReference type="PDB" id="4W2F">
    <property type="method" value="X-ray"/>
    <property type="resolution" value="2.40 A"/>
    <property type="chains" value="B2/D2=1-72"/>
</dbReference>
<dbReference type="PDB" id="4W2G">
    <property type="method" value="X-ray"/>
    <property type="resolution" value="2.55 A"/>
    <property type="chains" value="B2/D2=1-72"/>
</dbReference>
<dbReference type="PDB" id="4W2H">
    <property type="method" value="X-ray"/>
    <property type="resolution" value="2.70 A"/>
    <property type="chains" value="B2/D2=1-72"/>
</dbReference>
<dbReference type="PDB" id="4W2I">
    <property type="method" value="X-ray"/>
    <property type="resolution" value="2.70 A"/>
    <property type="chains" value="B2/D2=1-72"/>
</dbReference>
<dbReference type="PDB" id="4W4G">
    <property type="method" value="X-ray"/>
    <property type="resolution" value="3.30 A"/>
    <property type="chains" value="R2/Y2=1-72"/>
</dbReference>
<dbReference type="PDB" id="4WPO">
    <property type="method" value="X-ray"/>
    <property type="resolution" value="2.80 A"/>
    <property type="chains" value="A2/C2=1-72"/>
</dbReference>
<dbReference type="PDB" id="4WQ1">
    <property type="method" value="X-ray"/>
    <property type="resolution" value="3.10 A"/>
    <property type="chains" value="G5/K8=4-69"/>
</dbReference>
<dbReference type="PDB" id="4WQF">
    <property type="method" value="X-ray"/>
    <property type="resolution" value="2.80 A"/>
    <property type="chains" value="A2/C2=1-72"/>
</dbReference>
<dbReference type="PDB" id="4WQR">
    <property type="method" value="X-ray"/>
    <property type="resolution" value="3.15 A"/>
    <property type="chains" value="G5/K8=1-72"/>
</dbReference>
<dbReference type="PDB" id="4WQU">
    <property type="method" value="X-ray"/>
    <property type="resolution" value="2.80 A"/>
    <property type="chains" value="A2/C2=1-72"/>
</dbReference>
<dbReference type="PDB" id="4WQY">
    <property type="method" value="X-ray"/>
    <property type="resolution" value="2.80 A"/>
    <property type="chains" value="A2/C2=1-72"/>
</dbReference>
<dbReference type="PDB" id="4WR6">
    <property type="method" value="X-ray"/>
    <property type="resolution" value="3.05 A"/>
    <property type="chains" value="G5/K8=1-72"/>
</dbReference>
<dbReference type="PDB" id="4WRA">
    <property type="method" value="X-ray"/>
    <property type="resolution" value="3.05 A"/>
    <property type="chains" value="G5/K8=1-72"/>
</dbReference>
<dbReference type="PDB" id="4WRO">
    <property type="method" value="X-ray"/>
    <property type="resolution" value="3.05 A"/>
    <property type="chains" value="K8=1-72"/>
</dbReference>
<dbReference type="PDB" id="4WSD">
    <property type="method" value="X-ray"/>
    <property type="resolution" value="2.95 A"/>
    <property type="chains" value="G5/K8=1-72"/>
</dbReference>
<dbReference type="PDB" id="4WSM">
    <property type="method" value="X-ray"/>
    <property type="resolution" value="3.30 A"/>
    <property type="chains" value="G5/K8=1-72"/>
</dbReference>
<dbReference type="PDB" id="4WT1">
    <property type="method" value="X-ray"/>
    <property type="resolution" value="3.05 A"/>
    <property type="chains" value="G5/K8=1-72"/>
</dbReference>
<dbReference type="PDB" id="4WT8">
    <property type="method" value="X-ray"/>
    <property type="resolution" value="3.40 A"/>
    <property type="chains" value="CK/DK=2-72"/>
</dbReference>
<dbReference type="PDB" id="4WU1">
    <property type="method" value="X-ray"/>
    <property type="resolution" value="3.20 A"/>
    <property type="chains" value="G5/K8=1-72"/>
</dbReference>
<dbReference type="PDB" id="4WZD">
    <property type="method" value="X-ray"/>
    <property type="resolution" value="3.10 A"/>
    <property type="chains" value="G5/K8=1-72"/>
</dbReference>
<dbReference type="PDB" id="4WZO">
    <property type="method" value="X-ray"/>
    <property type="resolution" value="3.30 A"/>
    <property type="chains" value="G5/K8=1-72"/>
</dbReference>
<dbReference type="PDB" id="4Y4O">
    <property type="method" value="X-ray"/>
    <property type="resolution" value="2.30 A"/>
    <property type="chains" value="12/22=1-72"/>
</dbReference>
<dbReference type="PDB" id="4Y4P">
    <property type="method" value="X-ray"/>
    <property type="resolution" value="2.50 A"/>
    <property type="chains" value="12/22=1-72"/>
</dbReference>
<dbReference type="PDB" id="4YPB">
    <property type="method" value="X-ray"/>
    <property type="resolution" value="3.40 A"/>
    <property type="chains" value="R2/Y2=1-72"/>
</dbReference>
<dbReference type="PDB" id="4YZV">
    <property type="method" value="X-ray"/>
    <property type="resolution" value="3.10 A"/>
    <property type="chains" value="R2/Y2=1-72"/>
</dbReference>
<dbReference type="PDB" id="4Z3S">
    <property type="method" value="X-ray"/>
    <property type="resolution" value="2.65 A"/>
    <property type="chains" value="12/22=1-72"/>
</dbReference>
<dbReference type="PDB" id="4Z8C">
    <property type="method" value="X-ray"/>
    <property type="resolution" value="2.90 A"/>
    <property type="chains" value="12/22=1-72"/>
</dbReference>
<dbReference type="PDB" id="4ZER">
    <property type="method" value="X-ray"/>
    <property type="resolution" value="3.10 A"/>
    <property type="chains" value="12/22=1-70"/>
</dbReference>
<dbReference type="PDB" id="4ZSN">
    <property type="method" value="X-ray"/>
    <property type="resolution" value="3.60 A"/>
    <property type="chains" value="R2/Y2=1-72"/>
</dbReference>
<dbReference type="PDB" id="5CZP">
    <property type="method" value="X-ray"/>
    <property type="resolution" value="3.30 A"/>
    <property type="chains" value="R2/Y2=1-72"/>
</dbReference>
<dbReference type="PDB" id="5D8B">
    <property type="method" value="X-ray"/>
    <property type="resolution" value="3.63 A"/>
    <property type="chains" value="SB/W=1-72"/>
</dbReference>
<dbReference type="PDB" id="5DFE">
    <property type="method" value="X-ray"/>
    <property type="resolution" value="3.10 A"/>
    <property type="chains" value="R2/Y2=1-72"/>
</dbReference>
<dbReference type="PDB" id="5DOX">
    <property type="method" value="X-ray"/>
    <property type="resolution" value="3.10 A"/>
    <property type="chains" value="12/22=1-72"/>
</dbReference>
<dbReference type="PDB" id="5DOY">
    <property type="method" value="X-ray"/>
    <property type="resolution" value="2.60 A"/>
    <property type="chains" value="12/22=1-72"/>
</dbReference>
<dbReference type="PDB" id="5E7K">
    <property type="method" value="X-ray"/>
    <property type="resolution" value="3.20 A"/>
    <property type="chains" value="G5/K8=1-72"/>
</dbReference>
<dbReference type="PDB" id="5E81">
    <property type="method" value="X-ray"/>
    <property type="resolution" value="2.95 A"/>
    <property type="chains" value="G5/K8=1-72"/>
</dbReference>
<dbReference type="PDB" id="5EL4">
    <property type="method" value="X-ray"/>
    <property type="resolution" value="3.15 A"/>
    <property type="chains" value="G5/K8=1-72"/>
</dbReference>
<dbReference type="PDB" id="5EL5">
    <property type="method" value="X-ray"/>
    <property type="resolution" value="3.15 A"/>
    <property type="chains" value="G5/K8=1-72"/>
</dbReference>
<dbReference type="PDB" id="5EL6">
    <property type="method" value="X-ray"/>
    <property type="resolution" value="3.10 A"/>
    <property type="chains" value="G5/K8=1-72"/>
</dbReference>
<dbReference type="PDB" id="5EL7">
    <property type="method" value="X-ray"/>
    <property type="resolution" value="3.15 A"/>
    <property type="chains" value="G5/K8=1-72"/>
</dbReference>
<dbReference type="PDB" id="5F8K">
    <property type="method" value="X-ray"/>
    <property type="resolution" value="2.80 A"/>
    <property type="chains" value="12/22=1-70"/>
</dbReference>
<dbReference type="PDB" id="5FDU">
    <property type="method" value="X-ray"/>
    <property type="resolution" value="2.90 A"/>
    <property type="chains" value="12/22=1-70"/>
</dbReference>
<dbReference type="PDB" id="5FDV">
    <property type="method" value="X-ray"/>
    <property type="resolution" value="2.80 A"/>
    <property type="chains" value="12/22=1-70"/>
</dbReference>
<dbReference type="PDB" id="5HAU">
    <property type="method" value="X-ray"/>
    <property type="resolution" value="3.00 A"/>
    <property type="chains" value="10/20=1-72"/>
</dbReference>
<dbReference type="PDB" id="5HCP">
    <property type="method" value="X-ray"/>
    <property type="resolution" value="2.89 A"/>
    <property type="chains" value="12/22=1-72"/>
</dbReference>
<dbReference type="PDB" id="5HCQ">
    <property type="method" value="X-ray"/>
    <property type="resolution" value="2.80 A"/>
    <property type="chains" value="12/22=1-72"/>
</dbReference>
<dbReference type="PDB" id="5HCR">
    <property type="method" value="X-ray"/>
    <property type="resolution" value="2.80 A"/>
    <property type="chains" value="12/22=1-72"/>
</dbReference>
<dbReference type="PDB" id="5HD1">
    <property type="method" value="X-ray"/>
    <property type="resolution" value="2.70 A"/>
    <property type="chains" value="12/22=1-72"/>
</dbReference>
<dbReference type="PDB" id="5IB7">
    <property type="method" value="X-ray"/>
    <property type="resolution" value="2.99 A"/>
    <property type="chains" value="G5/K8=1-72"/>
</dbReference>
<dbReference type="PDB" id="5IB8">
    <property type="method" value="X-ray"/>
    <property type="resolution" value="3.13 A"/>
    <property type="chains" value="G5/K8=1-72"/>
</dbReference>
<dbReference type="PDB" id="5IBB">
    <property type="method" value="X-ray"/>
    <property type="resolution" value="2.96 A"/>
    <property type="chains" value="G5/K8=1-72"/>
</dbReference>
<dbReference type="PDB" id="5J30">
    <property type="method" value="X-ray"/>
    <property type="resolution" value="3.20 A"/>
    <property type="chains" value="R2/Y2=1-72"/>
</dbReference>
<dbReference type="PDB" id="5J3C">
    <property type="method" value="X-ray"/>
    <property type="resolution" value="3.04 A"/>
    <property type="chains" value="R2/Y2=1-72"/>
</dbReference>
<dbReference type="PDB" id="5J4B">
    <property type="method" value="X-ray"/>
    <property type="resolution" value="2.60 A"/>
    <property type="chains" value="12/22=1-72"/>
</dbReference>
<dbReference type="PDB" id="5J4C">
    <property type="method" value="X-ray"/>
    <property type="resolution" value="2.80 A"/>
    <property type="chains" value="12/22=1-72"/>
</dbReference>
<dbReference type="PDB" id="5J8B">
    <property type="method" value="X-ray"/>
    <property type="resolution" value="2.60 A"/>
    <property type="chains" value="2=1-72"/>
</dbReference>
<dbReference type="PDB" id="5NDJ">
    <property type="method" value="X-ray"/>
    <property type="resolution" value="3.15 A"/>
    <property type="chains" value="G5/K8=1-72"/>
</dbReference>
<dbReference type="PDB" id="5NDK">
    <property type="method" value="X-ray"/>
    <property type="resolution" value="2.95 A"/>
    <property type="chains" value="G5/K8=1-72"/>
</dbReference>
<dbReference type="PDB" id="5OT7">
    <property type="method" value="EM"/>
    <property type="resolution" value="3.80 A"/>
    <property type="chains" value="X=2-72"/>
</dbReference>
<dbReference type="PDB" id="5UQ7">
    <property type="method" value="EM"/>
    <property type="resolution" value="3.50 A"/>
    <property type="chains" value="2=1-70"/>
</dbReference>
<dbReference type="PDB" id="5UQ8">
    <property type="method" value="EM"/>
    <property type="resolution" value="3.20 A"/>
    <property type="chains" value="2=1-70"/>
</dbReference>
<dbReference type="PDB" id="5VP2">
    <property type="method" value="X-ray"/>
    <property type="resolution" value="2.80 A"/>
    <property type="chains" value="12/22=1-72"/>
</dbReference>
<dbReference type="PDB" id="5VPO">
    <property type="method" value="X-ray"/>
    <property type="resolution" value="3.34 A"/>
    <property type="chains" value="R2/Y2=1-72"/>
</dbReference>
<dbReference type="PDB" id="5VPP">
    <property type="method" value="X-ray"/>
    <property type="resolution" value="3.90 A"/>
    <property type="chains" value="R2/Y2=1-72"/>
</dbReference>
<dbReference type="PDB" id="5W4K">
    <property type="method" value="X-ray"/>
    <property type="resolution" value="2.70 A"/>
    <property type="chains" value="12/22=1-72"/>
</dbReference>
<dbReference type="PDB" id="5WIS">
    <property type="method" value="X-ray"/>
    <property type="resolution" value="2.70 A"/>
    <property type="chains" value="12/22=1-72"/>
</dbReference>
<dbReference type="PDB" id="5WIT">
    <property type="method" value="X-ray"/>
    <property type="resolution" value="2.60 A"/>
    <property type="chains" value="12/22=1-72"/>
</dbReference>
<dbReference type="PDB" id="5ZLU">
    <property type="method" value="EM"/>
    <property type="resolution" value="3.60 A"/>
    <property type="chains" value="u=6-72"/>
</dbReference>
<dbReference type="PDB" id="6BUW">
    <property type="method" value="X-ray"/>
    <property type="resolution" value="3.50 A"/>
    <property type="chains" value="R2/Y2=1-72"/>
</dbReference>
<dbReference type="PDB" id="6BZ6">
    <property type="method" value="X-ray"/>
    <property type="resolution" value="3.18 A"/>
    <property type="chains" value="R2/Y2=1-72"/>
</dbReference>
<dbReference type="PDB" id="6BZ7">
    <property type="method" value="X-ray"/>
    <property type="resolution" value="3.68 A"/>
    <property type="chains" value="R2/Y2=1-72"/>
</dbReference>
<dbReference type="PDB" id="6BZ8">
    <property type="method" value="X-ray"/>
    <property type="resolution" value="3.74 A"/>
    <property type="chains" value="R2/Y2=1-72"/>
</dbReference>
<dbReference type="PDB" id="6C5L">
    <property type="method" value="X-ray"/>
    <property type="resolution" value="3.20 A"/>
    <property type="chains" value="B2/D2=1-72"/>
</dbReference>
<dbReference type="PDB" id="6CAE">
    <property type="method" value="X-ray"/>
    <property type="resolution" value="2.60 A"/>
    <property type="chains" value="12/22=1-72"/>
</dbReference>
<dbReference type="PDB" id="6CFJ">
    <property type="method" value="X-ray"/>
    <property type="resolution" value="2.80 A"/>
    <property type="chains" value="12/22=1-72"/>
</dbReference>
<dbReference type="PDB" id="6CFK">
    <property type="method" value="X-ray"/>
    <property type="resolution" value="2.70 A"/>
    <property type="chains" value="12/22=1-72"/>
</dbReference>
<dbReference type="PDB" id="6CFL">
    <property type="method" value="X-ray"/>
    <property type="resolution" value="2.60 A"/>
    <property type="chains" value="12/22=1-72"/>
</dbReference>
<dbReference type="PDB" id="6CZR">
    <property type="method" value="X-ray"/>
    <property type="resolution" value="3.14 A"/>
    <property type="chains" value="12/22=1-70"/>
</dbReference>
<dbReference type="PDB" id="6FKR">
    <property type="method" value="X-ray"/>
    <property type="resolution" value="3.20 A"/>
    <property type="chains" value="12/22=1-70"/>
</dbReference>
<dbReference type="PDB" id="6GSJ">
    <property type="method" value="X-ray"/>
    <property type="resolution" value="2.96 A"/>
    <property type="chains" value="G5/K8=1-72"/>
</dbReference>
<dbReference type="PDB" id="6GSK">
    <property type="method" value="X-ray"/>
    <property type="resolution" value="3.36 A"/>
    <property type="chains" value="G5/K8=1-72"/>
</dbReference>
<dbReference type="PDB" id="6GSL">
    <property type="method" value="X-ray"/>
    <property type="resolution" value="3.16 A"/>
    <property type="chains" value="G5/K8=1-72"/>
</dbReference>
<dbReference type="PDB" id="6GZQ">
    <property type="method" value="EM"/>
    <property type="resolution" value="3.28 A"/>
    <property type="chains" value="X1=4-72"/>
</dbReference>
<dbReference type="PDB" id="6GZX">
    <property type="method" value="EM"/>
    <property type="resolution" value="4.57 A"/>
    <property type="chains" value="X1/X2=4-72"/>
</dbReference>
<dbReference type="PDB" id="6GZZ">
    <property type="method" value="EM"/>
    <property type="resolution" value="4.13 A"/>
    <property type="chains" value="X1/X2=4-72"/>
</dbReference>
<dbReference type="PDB" id="6N9E">
    <property type="method" value="X-ray"/>
    <property type="resolution" value="3.70 A"/>
    <property type="chains" value="12/22=1-72"/>
</dbReference>
<dbReference type="PDB" id="6N9F">
    <property type="method" value="X-ray"/>
    <property type="resolution" value="3.70 A"/>
    <property type="chains" value="12/22=1-72"/>
</dbReference>
<dbReference type="PDB" id="6ND5">
    <property type="method" value="X-ray"/>
    <property type="resolution" value="2.60 A"/>
    <property type="chains" value="12/22=1-72"/>
</dbReference>
<dbReference type="PDB" id="6ND6">
    <property type="method" value="X-ray"/>
    <property type="resolution" value="2.85 A"/>
    <property type="chains" value="12/22=1-72"/>
</dbReference>
<dbReference type="PDB" id="6NDK">
    <property type="method" value="X-ray"/>
    <property type="resolution" value="3.64 A"/>
    <property type="chains" value="R2/Y2=1-72"/>
</dbReference>
<dbReference type="PDB" id="6NSH">
    <property type="method" value="X-ray"/>
    <property type="resolution" value="3.40 A"/>
    <property type="chains" value="R2/Y2=1-72"/>
</dbReference>
<dbReference type="PDB" id="6NTA">
    <property type="method" value="X-ray"/>
    <property type="resolution" value="3.10 A"/>
    <property type="chains" value="R2/Y2=1-72"/>
</dbReference>
<dbReference type="PDB" id="6NUO">
    <property type="method" value="X-ray"/>
    <property type="resolution" value="3.20 A"/>
    <property type="chains" value="R2/Y2=1-72"/>
</dbReference>
<dbReference type="PDB" id="6NWY">
    <property type="method" value="X-ray"/>
    <property type="resolution" value="3.50 A"/>
    <property type="chains" value="R2/Y2=1-72"/>
</dbReference>
<dbReference type="PDB" id="6O3M">
    <property type="method" value="X-ray"/>
    <property type="resolution" value="3.97 A"/>
    <property type="chains" value="R2/Y2=1-72"/>
</dbReference>
<dbReference type="PDB" id="6O97">
    <property type="method" value="X-ray"/>
    <property type="resolution" value="2.75 A"/>
    <property type="chains" value="12/22=1-72"/>
</dbReference>
<dbReference type="PDB" id="6OF1">
    <property type="method" value="X-ray"/>
    <property type="resolution" value="2.80 A"/>
    <property type="chains" value="12/22=1-72"/>
</dbReference>
<dbReference type="PDB" id="6OF6">
    <property type="method" value="X-ray"/>
    <property type="resolution" value="3.20 A"/>
    <property type="chains" value="R2/Y2=1-72"/>
</dbReference>
<dbReference type="PDB" id="6OJ2">
    <property type="method" value="X-ray"/>
    <property type="resolution" value="3.20 A"/>
    <property type="chains" value="R2/Y2=1-72"/>
</dbReference>
<dbReference type="PDB" id="6OPE">
    <property type="method" value="X-ray"/>
    <property type="resolution" value="3.10 A"/>
    <property type="chains" value="R2/Y2=1-72"/>
</dbReference>
<dbReference type="PDB" id="6ORD">
    <property type="method" value="X-ray"/>
    <property type="resolution" value="3.10 A"/>
    <property type="chains" value="R2/Y2=1-72"/>
</dbReference>
<dbReference type="PDB" id="6OSI">
    <property type="method" value="X-ray"/>
    <property type="resolution" value="4.14 A"/>
    <property type="chains" value="R2/Y2=1-72"/>
</dbReference>
<dbReference type="PDB" id="6OTR">
    <property type="method" value="X-ray"/>
    <property type="resolution" value="3.12 A"/>
    <property type="chains" value="R2/Y2=1-72"/>
</dbReference>
<dbReference type="PDB" id="6OXA">
    <property type="method" value="X-ray"/>
    <property type="resolution" value="3.25 A"/>
    <property type="chains" value="R2/Y2=1-72"/>
</dbReference>
<dbReference type="PDB" id="6OXI">
    <property type="method" value="X-ray"/>
    <property type="resolution" value="3.50 A"/>
    <property type="chains" value="R2/Y2=1-72"/>
</dbReference>
<dbReference type="PDB" id="6Q95">
    <property type="method" value="EM"/>
    <property type="resolution" value="3.70 A"/>
    <property type="chains" value="Y=12-62"/>
</dbReference>
<dbReference type="PDB" id="6QNQ">
    <property type="method" value="X-ray"/>
    <property type="resolution" value="3.50 A"/>
    <property type="chains" value="G5/K8=1-72"/>
</dbReference>
<dbReference type="PDB" id="6QNR">
    <property type="method" value="X-ray"/>
    <property type="resolution" value="3.10 A"/>
    <property type="chains" value="G5/K8=1-72"/>
</dbReference>
<dbReference type="PDB" id="6UCQ">
    <property type="method" value="X-ray"/>
    <property type="resolution" value="3.50 A"/>
    <property type="chains" value="12/22=1-72"/>
</dbReference>
<dbReference type="PDB" id="6UO1">
    <property type="method" value="X-ray"/>
    <property type="resolution" value="2.95 A"/>
    <property type="chains" value="12/22=1-72"/>
</dbReference>
<dbReference type="PDB" id="6XHV">
    <property type="method" value="X-ray"/>
    <property type="resolution" value="2.40 A"/>
    <property type="chains" value="12/22=1-72"/>
</dbReference>
<dbReference type="PDB" id="6XHW">
    <property type="method" value="X-ray"/>
    <property type="resolution" value="2.50 A"/>
    <property type="chains" value="12/22=1-72"/>
</dbReference>
<dbReference type="PDB" id="6XHX">
    <property type="method" value="X-ray"/>
    <property type="resolution" value="2.55 A"/>
    <property type="chains" value="12/22=1-72"/>
</dbReference>
<dbReference type="PDB" id="6XHY">
    <property type="method" value="X-ray"/>
    <property type="resolution" value="2.60 A"/>
    <property type="chains" value="12/22=1-72"/>
</dbReference>
<dbReference type="PDB" id="6XQD">
    <property type="method" value="X-ray"/>
    <property type="resolution" value="2.80 A"/>
    <property type="chains" value="12/22=1-72"/>
</dbReference>
<dbReference type="PDB" id="6XQE">
    <property type="method" value="X-ray"/>
    <property type="resolution" value="3.00 A"/>
    <property type="chains" value="12/22=1-72"/>
</dbReference>
<dbReference type="PDB" id="7AZO">
    <property type="method" value="X-ray"/>
    <property type="resolution" value="3.30 A"/>
    <property type="chains" value="L29A/L29B=1-72"/>
</dbReference>
<dbReference type="PDB" id="7AZS">
    <property type="method" value="X-ray"/>
    <property type="resolution" value="3.10 A"/>
    <property type="chains" value="L29A/L29B=1-72"/>
</dbReference>
<dbReference type="PDB" id="7JQL">
    <property type="method" value="X-ray"/>
    <property type="resolution" value="3.00 A"/>
    <property type="chains" value="12/22=1-72"/>
</dbReference>
<dbReference type="PDB" id="7JQM">
    <property type="method" value="X-ray"/>
    <property type="resolution" value="3.05 A"/>
    <property type="chains" value="12/22=1-72"/>
</dbReference>
<dbReference type="PDB" id="7LH5">
    <property type="method" value="X-ray"/>
    <property type="resolution" value="3.27 A"/>
    <property type="chains" value="B2/D2=1-72"/>
</dbReference>
<dbReference type="PDB" id="7MD7">
    <property type="method" value="X-ray"/>
    <property type="resolution" value="2.80 A"/>
    <property type="chains" value="12/22=1-72"/>
</dbReference>
<dbReference type="PDB" id="7RQ8">
    <property type="method" value="X-ray"/>
    <property type="resolution" value="2.50 A"/>
    <property type="chains" value="12/22=1-72"/>
</dbReference>
<dbReference type="PDB" id="7RQ9">
    <property type="method" value="X-ray"/>
    <property type="resolution" value="2.60 A"/>
    <property type="chains" value="12/22=1-72"/>
</dbReference>
<dbReference type="PDB" id="7RQA">
    <property type="method" value="X-ray"/>
    <property type="resolution" value="2.40 A"/>
    <property type="chains" value="12/22=1-72"/>
</dbReference>
<dbReference type="PDB" id="7RQB">
    <property type="method" value="X-ray"/>
    <property type="resolution" value="2.45 A"/>
    <property type="chains" value="12/22=1-72"/>
</dbReference>
<dbReference type="PDB" id="7RQC">
    <property type="method" value="X-ray"/>
    <property type="resolution" value="2.50 A"/>
    <property type="chains" value="12/22=1-72"/>
</dbReference>
<dbReference type="PDB" id="7RQD">
    <property type="method" value="X-ray"/>
    <property type="resolution" value="2.50 A"/>
    <property type="chains" value="12/22=1-72"/>
</dbReference>
<dbReference type="PDB" id="7RQE">
    <property type="method" value="X-ray"/>
    <property type="resolution" value="2.40 A"/>
    <property type="chains" value="12/22=1-72"/>
</dbReference>
<dbReference type="PDB" id="7U2H">
    <property type="method" value="X-ray"/>
    <property type="resolution" value="2.55 A"/>
    <property type="chains" value="12/22=1-72"/>
</dbReference>
<dbReference type="PDB" id="7U2I">
    <property type="method" value="X-ray"/>
    <property type="resolution" value="2.55 A"/>
    <property type="chains" value="12/22=1-72"/>
</dbReference>
<dbReference type="PDB" id="7U2J">
    <property type="method" value="X-ray"/>
    <property type="resolution" value="2.55 A"/>
    <property type="chains" value="12/22=1-72"/>
</dbReference>
<dbReference type="PDB" id="8CVJ">
    <property type="method" value="X-ray"/>
    <property type="resolution" value="2.40 A"/>
    <property type="chains" value="12/22=1-72"/>
</dbReference>
<dbReference type="PDB" id="8CVK">
    <property type="method" value="X-ray"/>
    <property type="resolution" value="2.50 A"/>
    <property type="chains" value="12/22=1-72"/>
</dbReference>
<dbReference type="PDB" id="8CVL">
    <property type="method" value="X-ray"/>
    <property type="resolution" value="2.30 A"/>
    <property type="chains" value="12/22=1-72"/>
</dbReference>
<dbReference type="PDB" id="8EKB">
    <property type="method" value="X-ray"/>
    <property type="resolution" value="2.70 A"/>
    <property type="chains" value="12/22=1-72"/>
</dbReference>
<dbReference type="PDB" id="8EV6">
    <property type="method" value="X-ray"/>
    <property type="resolution" value="2.95 A"/>
    <property type="chains" value="12/22=1-72"/>
</dbReference>
<dbReference type="PDB" id="8EV7">
    <property type="method" value="X-ray"/>
    <property type="resolution" value="2.89 A"/>
    <property type="chains" value="12/22=1-72"/>
</dbReference>
<dbReference type="PDB" id="8FC1">
    <property type="method" value="X-ray"/>
    <property type="resolution" value="2.50 A"/>
    <property type="chains" value="12/22=1-72"/>
</dbReference>
<dbReference type="PDB" id="8FC2">
    <property type="method" value="X-ray"/>
    <property type="resolution" value="2.50 A"/>
    <property type="chains" value="12/22=1-72"/>
</dbReference>
<dbReference type="PDB" id="8FC3">
    <property type="method" value="X-ray"/>
    <property type="resolution" value="2.60 A"/>
    <property type="chains" value="12/22=1-72"/>
</dbReference>
<dbReference type="PDB" id="8FC4">
    <property type="method" value="X-ray"/>
    <property type="resolution" value="2.45 A"/>
    <property type="chains" value="12/22=1-72"/>
</dbReference>
<dbReference type="PDB" id="8FC5">
    <property type="method" value="X-ray"/>
    <property type="resolution" value="2.65 A"/>
    <property type="chains" value="12/22=1-72"/>
</dbReference>
<dbReference type="PDB" id="8FC6">
    <property type="method" value="X-ray"/>
    <property type="resolution" value="2.35 A"/>
    <property type="chains" value="12/22=1-72"/>
</dbReference>
<dbReference type="PDB" id="8FOM">
    <property type="method" value="X-ray"/>
    <property type="resolution" value="3.58 A"/>
    <property type="chains" value="R2/Y2=1-72"/>
</dbReference>
<dbReference type="PDB" id="8FON">
    <property type="method" value="X-ray"/>
    <property type="resolution" value="3.64 A"/>
    <property type="chains" value="R2/Y2=1-72"/>
</dbReference>
<dbReference type="PDB" id="8G29">
    <property type="method" value="X-ray"/>
    <property type="resolution" value="2.55 A"/>
    <property type="chains" value="12/22=1-72"/>
</dbReference>
<dbReference type="PDB" id="8G2A">
    <property type="method" value="X-ray"/>
    <property type="resolution" value="2.45 A"/>
    <property type="chains" value="12/22=1-72"/>
</dbReference>
<dbReference type="PDB" id="8G2B">
    <property type="method" value="X-ray"/>
    <property type="resolution" value="2.55 A"/>
    <property type="chains" value="12/22=1-72"/>
</dbReference>
<dbReference type="PDB" id="8G2C">
    <property type="method" value="X-ray"/>
    <property type="resolution" value="2.65 A"/>
    <property type="chains" value="12/22=1-72"/>
</dbReference>
<dbReference type="PDB" id="8G2D">
    <property type="method" value="X-ray"/>
    <property type="resolution" value="2.70 A"/>
    <property type="chains" value="12/22=1-72"/>
</dbReference>
<dbReference type="PDB" id="8T8B">
    <property type="method" value="X-ray"/>
    <property type="resolution" value="2.65 A"/>
    <property type="chains" value="12/22=1-72"/>
</dbReference>
<dbReference type="PDB" id="8T8C">
    <property type="method" value="X-ray"/>
    <property type="resolution" value="2.60 A"/>
    <property type="chains" value="12/22=1-72"/>
</dbReference>
<dbReference type="PDB" id="8UD6">
    <property type="method" value="X-ray"/>
    <property type="resolution" value="2.70 A"/>
    <property type="chains" value="12/22=1-72"/>
</dbReference>
<dbReference type="PDB" id="8UD7">
    <property type="method" value="X-ray"/>
    <property type="resolution" value="2.55 A"/>
    <property type="chains" value="12/22=1-72"/>
</dbReference>
<dbReference type="PDB" id="8UD8">
    <property type="method" value="X-ray"/>
    <property type="resolution" value="2.60 A"/>
    <property type="chains" value="12/22=1-72"/>
</dbReference>
<dbReference type="PDB" id="8UVR">
    <property type="method" value="X-ray"/>
    <property type="resolution" value="2.60 A"/>
    <property type="chains" value="12/22=1-72"/>
</dbReference>
<dbReference type="PDB" id="8UVS">
    <property type="method" value="X-ray"/>
    <property type="resolution" value="2.75 A"/>
    <property type="chains" value="12/22=1-72"/>
</dbReference>
<dbReference type="PDB" id="8VTU">
    <property type="method" value="X-ray"/>
    <property type="resolution" value="2.40 A"/>
    <property type="chains" value="12/22=1-72"/>
</dbReference>
<dbReference type="PDB" id="8VTV">
    <property type="method" value="X-ray"/>
    <property type="resolution" value="2.55 A"/>
    <property type="chains" value="12/22=1-72"/>
</dbReference>
<dbReference type="PDB" id="8VTW">
    <property type="method" value="X-ray"/>
    <property type="resolution" value="2.35 A"/>
    <property type="chains" value="12/22=1-72"/>
</dbReference>
<dbReference type="PDB" id="8VTX">
    <property type="method" value="X-ray"/>
    <property type="resolution" value="2.40 A"/>
    <property type="chains" value="12/22=1-72"/>
</dbReference>
<dbReference type="PDB" id="8VTY">
    <property type="method" value="X-ray"/>
    <property type="resolution" value="2.60 A"/>
    <property type="chains" value="12/22=1-72"/>
</dbReference>
<dbReference type="PDB" id="8WV1">
    <property type="method" value="X-ray"/>
    <property type="resolution" value="3.99 A"/>
    <property type="chains" value="X/x=1-72"/>
</dbReference>
<dbReference type="PDB" id="9B00">
    <property type="method" value="X-ray"/>
    <property type="resolution" value="2.80 A"/>
    <property type="chains" value="12/22=1-72"/>
</dbReference>
<dbReference type="PDB" id="9D0J">
    <property type="method" value="X-ray"/>
    <property type="resolution" value="2.50 A"/>
    <property type="chains" value="12/22=1-72"/>
</dbReference>
<dbReference type="PDB" id="9D7R">
    <property type="method" value="X-ray"/>
    <property type="resolution" value="2.70 A"/>
    <property type="chains" value="12/22=1-72"/>
</dbReference>
<dbReference type="PDB" id="9D7S">
    <property type="method" value="X-ray"/>
    <property type="resolution" value="2.85 A"/>
    <property type="chains" value="12/22=1-72"/>
</dbReference>
<dbReference type="PDB" id="9D7T">
    <property type="method" value="X-ray"/>
    <property type="resolution" value="2.70 A"/>
    <property type="chains" value="12/22=1-72"/>
</dbReference>
<dbReference type="PDB" id="9DFC">
    <property type="method" value="X-ray"/>
    <property type="resolution" value="2.50 A"/>
    <property type="chains" value="12/22=1-72"/>
</dbReference>
<dbReference type="PDB" id="9DFD">
    <property type="method" value="X-ray"/>
    <property type="resolution" value="2.60 A"/>
    <property type="chains" value="12/22=1-72"/>
</dbReference>
<dbReference type="PDB" id="9DFE">
    <property type="method" value="X-ray"/>
    <property type="resolution" value="2.60 A"/>
    <property type="chains" value="12/22=1-72"/>
</dbReference>
<dbReference type="PDBsum" id="1VVJ"/>
<dbReference type="PDBsum" id="1VY4"/>
<dbReference type="PDBsum" id="1VY5"/>
<dbReference type="PDBsum" id="1VY6"/>
<dbReference type="PDBsum" id="1VY7"/>
<dbReference type="PDBsum" id="4L47"/>
<dbReference type="PDBsum" id="4L71"/>
<dbReference type="PDBsum" id="4LEL"/>
<dbReference type="PDBsum" id="4LFZ"/>
<dbReference type="PDBsum" id="4LNT"/>
<dbReference type="PDBsum" id="4LSK"/>
<dbReference type="PDBsum" id="4LT8"/>
<dbReference type="PDBsum" id="4P6F"/>
<dbReference type="PDBsum" id="4P70"/>
<dbReference type="PDBsum" id="4TUA"/>
<dbReference type="PDBsum" id="4TUB"/>
<dbReference type="PDBsum" id="4TUC"/>
<dbReference type="PDBsum" id="4TUD"/>
<dbReference type="PDBsum" id="4TUE"/>
<dbReference type="PDBsum" id="4V42"/>
<dbReference type="PDBsum" id="4V4P"/>
<dbReference type="PDBsum" id="4V4X"/>
<dbReference type="PDBsum" id="4V4Y"/>
<dbReference type="PDBsum" id="4V4Z"/>
<dbReference type="PDBsum" id="4V51"/>
<dbReference type="PDBsum" id="4V5A"/>
<dbReference type="PDBsum" id="4V5C"/>
<dbReference type="PDBsum" id="4V5D"/>
<dbReference type="PDBsum" id="4V5E"/>
<dbReference type="PDBsum" id="4V5F"/>
<dbReference type="PDBsum" id="4V5G"/>
<dbReference type="PDBsum" id="4V5J"/>
<dbReference type="PDBsum" id="4V5K"/>
<dbReference type="PDBsum" id="4V5L"/>
<dbReference type="PDBsum" id="4V5M"/>
<dbReference type="PDBsum" id="4V5N"/>
<dbReference type="PDBsum" id="4V5P"/>
<dbReference type="PDBsum" id="4V5Q"/>
<dbReference type="PDBsum" id="4V5R"/>
<dbReference type="PDBsum" id="4V5S"/>
<dbReference type="PDBsum" id="4V68"/>
<dbReference type="PDBsum" id="4V6A"/>
<dbReference type="PDBsum" id="4V6F"/>
<dbReference type="PDBsum" id="4V6G"/>
<dbReference type="PDBsum" id="4V7J"/>
<dbReference type="PDBsum" id="4V7K"/>
<dbReference type="PDBsum" id="4V7L"/>
<dbReference type="PDBsum" id="4V7M"/>
<dbReference type="PDBsum" id="4V7W"/>
<dbReference type="PDBsum" id="4V7X"/>
<dbReference type="PDBsum" id="4V7Y"/>
<dbReference type="PDBsum" id="4V7Z"/>
<dbReference type="PDBsum" id="4V87"/>
<dbReference type="PDBsum" id="4V8A"/>
<dbReference type="PDBsum" id="4V8B"/>
<dbReference type="PDBsum" id="4V8C"/>
<dbReference type="PDBsum" id="4V8D"/>
<dbReference type="PDBsum" id="4V8E"/>
<dbReference type="PDBsum" id="4V8F"/>
<dbReference type="PDBsum" id="4V8G"/>
<dbReference type="PDBsum" id="4V8H"/>
<dbReference type="PDBsum" id="4V8I"/>
<dbReference type="PDBsum" id="4V8J"/>
<dbReference type="PDBsum" id="4V8N"/>
<dbReference type="PDBsum" id="4V8O"/>
<dbReference type="PDBsum" id="4V8Q"/>
<dbReference type="PDBsum" id="4V8U"/>
<dbReference type="PDBsum" id="4V8X"/>
<dbReference type="PDBsum" id="4V90"/>
<dbReference type="PDBsum" id="4V95"/>
<dbReference type="PDBsum" id="4V97"/>
<dbReference type="PDBsum" id="4V9A"/>
<dbReference type="PDBsum" id="4V9B"/>
<dbReference type="PDBsum" id="4V9H"/>
<dbReference type="PDBsum" id="4V9I"/>
<dbReference type="PDBsum" id="4V9R"/>
<dbReference type="PDBsum" id="4V9S"/>
<dbReference type="PDBsum" id="4W2E"/>
<dbReference type="PDBsum" id="4W2F"/>
<dbReference type="PDBsum" id="4W2G"/>
<dbReference type="PDBsum" id="4W2H"/>
<dbReference type="PDBsum" id="4W2I"/>
<dbReference type="PDBsum" id="4W4G"/>
<dbReference type="PDBsum" id="4WPO"/>
<dbReference type="PDBsum" id="4WQ1"/>
<dbReference type="PDBsum" id="4WQF"/>
<dbReference type="PDBsum" id="4WQR"/>
<dbReference type="PDBsum" id="4WQU"/>
<dbReference type="PDBsum" id="4WQY"/>
<dbReference type="PDBsum" id="4WR6"/>
<dbReference type="PDBsum" id="4WRA"/>
<dbReference type="PDBsum" id="4WRO"/>
<dbReference type="PDBsum" id="4WSD"/>
<dbReference type="PDBsum" id="4WSM"/>
<dbReference type="PDBsum" id="4WT1"/>
<dbReference type="PDBsum" id="4WT8"/>
<dbReference type="PDBsum" id="4WU1"/>
<dbReference type="PDBsum" id="4WZD"/>
<dbReference type="PDBsum" id="4WZO"/>
<dbReference type="PDBsum" id="4Y4O"/>
<dbReference type="PDBsum" id="4Y4P"/>
<dbReference type="PDBsum" id="4YPB"/>
<dbReference type="PDBsum" id="4YZV"/>
<dbReference type="PDBsum" id="4Z3S"/>
<dbReference type="PDBsum" id="4Z8C"/>
<dbReference type="PDBsum" id="4ZER"/>
<dbReference type="PDBsum" id="4ZSN"/>
<dbReference type="PDBsum" id="5CZP"/>
<dbReference type="PDBsum" id="5D8B"/>
<dbReference type="PDBsum" id="5DFE"/>
<dbReference type="PDBsum" id="5DOX"/>
<dbReference type="PDBsum" id="5DOY"/>
<dbReference type="PDBsum" id="5E7K"/>
<dbReference type="PDBsum" id="5E81"/>
<dbReference type="PDBsum" id="5EL4"/>
<dbReference type="PDBsum" id="5EL5"/>
<dbReference type="PDBsum" id="5EL6"/>
<dbReference type="PDBsum" id="5EL7"/>
<dbReference type="PDBsum" id="5F8K"/>
<dbReference type="PDBsum" id="5FDU"/>
<dbReference type="PDBsum" id="5FDV"/>
<dbReference type="PDBsum" id="5HAU"/>
<dbReference type="PDBsum" id="5HCP"/>
<dbReference type="PDBsum" id="5HCQ"/>
<dbReference type="PDBsum" id="5HCR"/>
<dbReference type="PDBsum" id="5HD1"/>
<dbReference type="PDBsum" id="5IB7"/>
<dbReference type="PDBsum" id="5IB8"/>
<dbReference type="PDBsum" id="5IBB"/>
<dbReference type="PDBsum" id="5J30"/>
<dbReference type="PDBsum" id="5J3C"/>
<dbReference type="PDBsum" id="5J4B"/>
<dbReference type="PDBsum" id="5J4C"/>
<dbReference type="PDBsum" id="5J8B"/>
<dbReference type="PDBsum" id="5NDJ"/>
<dbReference type="PDBsum" id="5NDK"/>
<dbReference type="PDBsum" id="5OT7"/>
<dbReference type="PDBsum" id="5UQ7"/>
<dbReference type="PDBsum" id="5UQ8"/>
<dbReference type="PDBsum" id="5VP2"/>
<dbReference type="PDBsum" id="5VPO"/>
<dbReference type="PDBsum" id="5VPP"/>
<dbReference type="PDBsum" id="5W4K"/>
<dbReference type="PDBsum" id="5WIS"/>
<dbReference type="PDBsum" id="5WIT"/>
<dbReference type="PDBsum" id="5ZLU"/>
<dbReference type="PDBsum" id="6BUW"/>
<dbReference type="PDBsum" id="6BZ6"/>
<dbReference type="PDBsum" id="6BZ7"/>
<dbReference type="PDBsum" id="6BZ8"/>
<dbReference type="PDBsum" id="6C5L"/>
<dbReference type="PDBsum" id="6CAE"/>
<dbReference type="PDBsum" id="6CFJ"/>
<dbReference type="PDBsum" id="6CFK"/>
<dbReference type="PDBsum" id="6CFL"/>
<dbReference type="PDBsum" id="6CZR"/>
<dbReference type="PDBsum" id="6FKR"/>
<dbReference type="PDBsum" id="6GSJ"/>
<dbReference type="PDBsum" id="6GSK"/>
<dbReference type="PDBsum" id="6GSL"/>
<dbReference type="PDBsum" id="6GZQ"/>
<dbReference type="PDBsum" id="6GZX"/>
<dbReference type="PDBsum" id="6GZZ"/>
<dbReference type="PDBsum" id="6N9E"/>
<dbReference type="PDBsum" id="6N9F"/>
<dbReference type="PDBsum" id="6ND5"/>
<dbReference type="PDBsum" id="6ND6"/>
<dbReference type="PDBsum" id="6NDK"/>
<dbReference type="PDBsum" id="6NSH"/>
<dbReference type="PDBsum" id="6NTA"/>
<dbReference type="PDBsum" id="6NUO"/>
<dbReference type="PDBsum" id="6NWY"/>
<dbReference type="PDBsum" id="6O3M"/>
<dbReference type="PDBsum" id="6O97"/>
<dbReference type="PDBsum" id="6OF1"/>
<dbReference type="PDBsum" id="6OF6"/>
<dbReference type="PDBsum" id="6OJ2"/>
<dbReference type="PDBsum" id="6OPE"/>
<dbReference type="PDBsum" id="6ORD"/>
<dbReference type="PDBsum" id="6OSI"/>
<dbReference type="PDBsum" id="6OTR"/>
<dbReference type="PDBsum" id="6OXA"/>
<dbReference type="PDBsum" id="6OXI"/>
<dbReference type="PDBsum" id="6Q95"/>
<dbReference type="PDBsum" id="6QNQ"/>
<dbReference type="PDBsum" id="6QNR"/>
<dbReference type="PDBsum" id="6UCQ"/>
<dbReference type="PDBsum" id="6UO1"/>
<dbReference type="PDBsum" id="6XHV"/>
<dbReference type="PDBsum" id="6XHW"/>
<dbReference type="PDBsum" id="6XHX"/>
<dbReference type="PDBsum" id="6XHY"/>
<dbReference type="PDBsum" id="6XQD"/>
<dbReference type="PDBsum" id="6XQE"/>
<dbReference type="PDBsum" id="7AZO"/>
<dbReference type="PDBsum" id="7AZS"/>
<dbReference type="PDBsum" id="7JQL"/>
<dbReference type="PDBsum" id="7JQM"/>
<dbReference type="PDBsum" id="7LH5"/>
<dbReference type="PDBsum" id="7MD7"/>
<dbReference type="PDBsum" id="7RQ8"/>
<dbReference type="PDBsum" id="7RQ9"/>
<dbReference type="PDBsum" id="7RQA"/>
<dbReference type="PDBsum" id="7RQB"/>
<dbReference type="PDBsum" id="7RQC"/>
<dbReference type="PDBsum" id="7RQD"/>
<dbReference type="PDBsum" id="7RQE"/>
<dbReference type="PDBsum" id="7U2H"/>
<dbReference type="PDBsum" id="7U2I"/>
<dbReference type="PDBsum" id="7U2J"/>
<dbReference type="PDBsum" id="8CVJ"/>
<dbReference type="PDBsum" id="8CVK"/>
<dbReference type="PDBsum" id="8CVL"/>
<dbReference type="PDBsum" id="8EKB"/>
<dbReference type="PDBsum" id="8EV6"/>
<dbReference type="PDBsum" id="8EV7"/>
<dbReference type="PDBsum" id="8FC1"/>
<dbReference type="PDBsum" id="8FC2"/>
<dbReference type="PDBsum" id="8FC3"/>
<dbReference type="PDBsum" id="8FC4"/>
<dbReference type="PDBsum" id="8FC5"/>
<dbReference type="PDBsum" id="8FC6"/>
<dbReference type="PDBsum" id="8FOM"/>
<dbReference type="PDBsum" id="8FON"/>
<dbReference type="PDBsum" id="8G29"/>
<dbReference type="PDBsum" id="8G2A"/>
<dbReference type="PDBsum" id="8G2B"/>
<dbReference type="PDBsum" id="8G2C"/>
<dbReference type="PDBsum" id="8G2D"/>
<dbReference type="PDBsum" id="8T8B"/>
<dbReference type="PDBsum" id="8T8C"/>
<dbReference type="PDBsum" id="8UD6"/>
<dbReference type="PDBsum" id="8UD7"/>
<dbReference type="PDBsum" id="8UD8"/>
<dbReference type="PDBsum" id="8UVR"/>
<dbReference type="PDBsum" id="8UVS"/>
<dbReference type="PDBsum" id="8VTU"/>
<dbReference type="PDBsum" id="8VTV"/>
<dbReference type="PDBsum" id="8VTW"/>
<dbReference type="PDBsum" id="8VTX"/>
<dbReference type="PDBsum" id="8VTY"/>
<dbReference type="PDBsum" id="8WV1"/>
<dbReference type="PDBsum" id="9B00"/>
<dbReference type="PDBsum" id="9D0J"/>
<dbReference type="PDBsum" id="9D7R"/>
<dbReference type="PDBsum" id="9D7S"/>
<dbReference type="PDBsum" id="9D7T"/>
<dbReference type="PDBsum" id="9DFC"/>
<dbReference type="PDBsum" id="9DFD"/>
<dbReference type="PDBsum" id="9DFE"/>
<dbReference type="EMDB" id="EMD-0101"/>
<dbReference type="EMDB" id="EMD-0104"/>
<dbReference type="EMDB" id="EMD-0105"/>
<dbReference type="EMDB" id="EMD-3852"/>
<dbReference type="EMDB" id="EMD-4475"/>
<dbReference type="EMDB" id="EMD-6934"/>
<dbReference type="EMDB" id="EMD-8596"/>
<dbReference type="EMDB" id="EMD-8597"/>
<dbReference type="SMR" id="Q5SHP6"/>
<dbReference type="IntAct" id="Q5SHP6">
    <property type="interactions" value="8"/>
</dbReference>
<dbReference type="EnsemblBacteria" id="BAD71507">
    <property type="protein sequence ID" value="BAD71507"/>
    <property type="gene ID" value="BAD71507"/>
</dbReference>
<dbReference type="GeneID" id="3169832"/>
<dbReference type="KEGG" id="ttj:TTHA1684"/>
<dbReference type="PATRIC" id="fig|300852.9.peg.1654"/>
<dbReference type="eggNOG" id="COG0255">
    <property type="taxonomic scope" value="Bacteria"/>
</dbReference>
<dbReference type="HOGENOM" id="CLU_158491_0_2_0"/>
<dbReference type="Proteomes" id="UP000000532">
    <property type="component" value="Chromosome"/>
</dbReference>
<dbReference type="GO" id="GO:0022625">
    <property type="term" value="C:cytosolic large ribosomal subunit"/>
    <property type="evidence" value="ECO:0007669"/>
    <property type="project" value="TreeGrafter"/>
</dbReference>
<dbReference type="GO" id="GO:0003735">
    <property type="term" value="F:structural constituent of ribosome"/>
    <property type="evidence" value="ECO:0007669"/>
    <property type="project" value="InterPro"/>
</dbReference>
<dbReference type="GO" id="GO:0006412">
    <property type="term" value="P:translation"/>
    <property type="evidence" value="ECO:0007669"/>
    <property type="project" value="UniProtKB-UniRule"/>
</dbReference>
<dbReference type="CDD" id="cd00427">
    <property type="entry name" value="Ribosomal_L29_HIP"/>
    <property type="match status" value="1"/>
</dbReference>
<dbReference type="FunFam" id="1.10.287.310:FF:000001">
    <property type="entry name" value="50S ribosomal protein L29"/>
    <property type="match status" value="1"/>
</dbReference>
<dbReference type="Gene3D" id="1.10.287.310">
    <property type="match status" value="1"/>
</dbReference>
<dbReference type="HAMAP" id="MF_00374">
    <property type="entry name" value="Ribosomal_uL29"/>
    <property type="match status" value="1"/>
</dbReference>
<dbReference type="InterPro" id="IPR050063">
    <property type="entry name" value="Ribosomal_protein_uL29"/>
</dbReference>
<dbReference type="InterPro" id="IPR001854">
    <property type="entry name" value="Ribosomal_uL29"/>
</dbReference>
<dbReference type="InterPro" id="IPR018254">
    <property type="entry name" value="Ribosomal_uL29_CS"/>
</dbReference>
<dbReference type="InterPro" id="IPR036049">
    <property type="entry name" value="Ribosomal_uL29_sf"/>
</dbReference>
<dbReference type="NCBIfam" id="TIGR00012">
    <property type="entry name" value="L29"/>
    <property type="match status" value="1"/>
</dbReference>
<dbReference type="PANTHER" id="PTHR10916">
    <property type="entry name" value="60S RIBOSOMAL PROTEIN L35/50S RIBOSOMAL PROTEIN L29"/>
    <property type="match status" value="1"/>
</dbReference>
<dbReference type="PANTHER" id="PTHR10916:SF0">
    <property type="entry name" value="LARGE RIBOSOMAL SUBUNIT PROTEIN UL29C"/>
    <property type="match status" value="1"/>
</dbReference>
<dbReference type="Pfam" id="PF00831">
    <property type="entry name" value="Ribosomal_L29"/>
    <property type="match status" value="1"/>
</dbReference>
<dbReference type="SUPFAM" id="SSF46561">
    <property type="entry name" value="Ribosomal protein L29 (L29p)"/>
    <property type="match status" value="1"/>
</dbReference>
<dbReference type="PROSITE" id="PS00579">
    <property type="entry name" value="RIBOSOMAL_L29"/>
    <property type="match status" value="1"/>
</dbReference>
<comment type="function">
    <text>One of the proteins that surrounds the polypeptide exit tunnel on the outside of the subunit.</text>
</comment>
<comment type="subunit">
    <text>Part of the 50S ribosomal subunit.</text>
</comment>
<comment type="mass spectrometry" mass="8652.0" method="MALDI" evidence="1"/>
<comment type="similarity">
    <text evidence="2">Belongs to the universal ribosomal protein uL29 family.</text>
</comment>
<organism>
    <name type="scientific">Thermus thermophilus (strain ATCC 27634 / DSM 579 / HB8)</name>
    <dbReference type="NCBI Taxonomy" id="300852"/>
    <lineage>
        <taxon>Bacteria</taxon>
        <taxon>Thermotogati</taxon>
        <taxon>Deinococcota</taxon>
        <taxon>Deinococci</taxon>
        <taxon>Thermales</taxon>
        <taxon>Thermaceae</taxon>
        <taxon>Thermus</taxon>
    </lineage>
</organism>
<gene>
    <name type="primary">rpmC</name>
    <name type="ordered locus">TTHA1684</name>
</gene>